<proteinExistence type="inferred from homology"/>
<protein>
    <recommendedName>
        <fullName evidence="1">Diaminopimelate epimerase</fullName>
        <shortName evidence="1">DAP epimerase</shortName>
        <ecNumber evidence="1">5.1.1.7</ecNumber>
    </recommendedName>
    <alternativeName>
        <fullName evidence="1">PLP-independent amino acid racemase</fullName>
    </alternativeName>
</protein>
<evidence type="ECO:0000255" key="1">
    <source>
        <dbReference type="HAMAP-Rule" id="MF_00197"/>
    </source>
</evidence>
<comment type="function">
    <text evidence="1">Catalyzes the stereoinversion of LL-2,6-diaminopimelate (L,L-DAP) to meso-diaminopimelate (meso-DAP), a precursor of L-lysine and an essential component of the bacterial peptidoglycan.</text>
</comment>
<comment type="catalytic activity">
    <reaction evidence="1">
        <text>(2S,6S)-2,6-diaminopimelate = meso-2,6-diaminopimelate</text>
        <dbReference type="Rhea" id="RHEA:15393"/>
        <dbReference type="ChEBI" id="CHEBI:57609"/>
        <dbReference type="ChEBI" id="CHEBI:57791"/>
        <dbReference type="EC" id="5.1.1.7"/>
    </reaction>
</comment>
<comment type="pathway">
    <text evidence="1">Amino-acid biosynthesis; L-lysine biosynthesis via DAP pathway; DL-2,6-diaminopimelate from LL-2,6-diaminopimelate: step 1/1.</text>
</comment>
<comment type="subunit">
    <text evidence="1">Homodimer.</text>
</comment>
<comment type="subcellular location">
    <subcellularLocation>
        <location evidence="1">Cytoplasm</location>
    </subcellularLocation>
</comment>
<comment type="similarity">
    <text evidence="1">Belongs to the diaminopimelate epimerase family.</text>
</comment>
<feature type="chain" id="PRO_1000099256" description="Diaminopimelate epimerase">
    <location>
        <begin position="1"/>
        <end position="274"/>
    </location>
</feature>
<feature type="active site" description="Proton donor" evidence="1">
    <location>
        <position position="73"/>
    </location>
</feature>
<feature type="active site" description="Proton acceptor" evidence="1">
    <location>
        <position position="217"/>
    </location>
</feature>
<feature type="binding site" evidence="1">
    <location>
        <position position="11"/>
    </location>
    <ligand>
        <name>substrate</name>
    </ligand>
</feature>
<feature type="binding site" evidence="1">
    <location>
        <position position="44"/>
    </location>
    <ligand>
        <name>substrate</name>
    </ligand>
</feature>
<feature type="binding site" evidence="1">
    <location>
        <position position="64"/>
    </location>
    <ligand>
        <name>substrate</name>
    </ligand>
</feature>
<feature type="binding site" evidence="1">
    <location>
        <begin position="74"/>
        <end position="75"/>
    </location>
    <ligand>
        <name>substrate</name>
    </ligand>
</feature>
<feature type="binding site" evidence="1">
    <location>
        <position position="157"/>
    </location>
    <ligand>
        <name>substrate</name>
    </ligand>
</feature>
<feature type="binding site" evidence="1">
    <location>
        <position position="190"/>
    </location>
    <ligand>
        <name>substrate</name>
    </ligand>
</feature>
<feature type="binding site" evidence="1">
    <location>
        <begin position="208"/>
        <end position="209"/>
    </location>
    <ligand>
        <name>substrate</name>
    </ligand>
</feature>
<feature type="binding site" evidence="1">
    <location>
        <begin position="218"/>
        <end position="219"/>
    </location>
    <ligand>
        <name>substrate</name>
    </ligand>
</feature>
<feature type="site" description="Could be important to modulate the pK values of the two catalytic cysteine residues" evidence="1">
    <location>
        <position position="159"/>
    </location>
</feature>
<feature type="site" description="Could be important to modulate the pK values of the two catalytic cysteine residues" evidence="1">
    <location>
        <position position="208"/>
    </location>
</feature>
<feature type="site" description="Important for dimerization" evidence="1">
    <location>
        <position position="268"/>
    </location>
</feature>
<reference key="1">
    <citation type="journal article" date="2008" name="J. Bacteriol.">
        <title>Complete genome sequence of uropathogenic Proteus mirabilis, a master of both adherence and motility.</title>
        <authorList>
            <person name="Pearson M.M."/>
            <person name="Sebaihia M."/>
            <person name="Churcher C."/>
            <person name="Quail M.A."/>
            <person name="Seshasayee A.S."/>
            <person name="Luscombe N.M."/>
            <person name="Abdellah Z."/>
            <person name="Arrosmith C."/>
            <person name="Atkin B."/>
            <person name="Chillingworth T."/>
            <person name="Hauser H."/>
            <person name="Jagels K."/>
            <person name="Moule S."/>
            <person name="Mungall K."/>
            <person name="Norbertczak H."/>
            <person name="Rabbinowitsch E."/>
            <person name="Walker D."/>
            <person name="Whithead S."/>
            <person name="Thomson N.R."/>
            <person name="Rather P.N."/>
            <person name="Parkhill J."/>
            <person name="Mobley H.L.T."/>
        </authorList>
    </citation>
    <scope>NUCLEOTIDE SEQUENCE [LARGE SCALE GENOMIC DNA]</scope>
    <source>
        <strain>HI4320</strain>
    </source>
</reference>
<dbReference type="EC" id="5.1.1.7" evidence="1"/>
<dbReference type="EMBL" id="AM942759">
    <property type="protein sequence ID" value="CAR46550.1"/>
    <property type="molecule type" value="Genomic_DNA"/>
</dbReference>
<dbReference type="RefSeq" id="WP_012368707.1">
    <property type="nucleotide sequence ID" value="NC_010554.1"/>
</dbReference>
<dbReference type="SMR" id="B4F1X7"/>
<dbReference type="EnsemblBacteria" id="CAR46550">
    <property type="protein sequence ID" value="CAR46550"/>
    <property type="gene ID" value="PMI3336"/>
</dbReference>
<dbReference type="GeneID" id="6802703"/>
<dbReference type="KEGG" id="pmr:PMI3336"/>
<dbReference type="PATRIC" id="fig|529507.6.peg.3263"/>
<dbReference type="eggNOG" id="COG0253">
    <property type="taxonomic scope" value="Bacteria"/>
</dbReference>
<dbReference type="HOGENOM" id="CLU_053306_1_1_6"/>
<dbReference type="UniPathway" id="UPA00034">
    <property type="reaction ID" value="UER00025"/>
</dbReference>
<dbReference type="Proteomes" id="UP000008319">
    <property type="component" value="Chromosome"/>
</dbReference>
<dbReference type="GO" id="GO:0005829">
    <property type="term" value="C:cytosol"/>
    <property type="evidence" value="ECO:0007669"/>
    <property type="project" value="TreeGrafter"/>
</dbReference>
<dbReference type="GO" id="GO:0008837">
    <property type="term" value="F:diaminopimelate epimerase activity"/>
    <property type="evidence" value="ECO:0007669"/>
    <property type="project" value="UniProtKB-UniRule"/>
</dbReference>
<dbReference type="GO" id="GO:0009089">
    <property type="term" value="P:lysine biosynthetic process via diaminopimelate"/>
    <property type="evidence" value="ECO:0007669"/>
    <property type="project" value="UniProtKB-UniRule"/>
</dbReference>
<dbReference type="FunFam" id="3.10.310.10:FF:000001">
    <property type="entry name" value="Diaminopimelate epimerase"/>
    <property type="match status" value="1"/>
</dbReference>
<dbReference type="FunFam" id="3.10.310.10:FF:000002">
    <property type="entry name" value="Diaminopimelate epimerase"/>
    <property type="match status" value="1"/>
</dbReference>
<dbReference type="Gene3D" id="3.10.310.10">
    <property type="entry name" value="Diaminopimelate Epimerase, Chain A, domain 1"/>
    <property type="match status" value="2"/>
</dbReference>
<dbReference type="HAMAP" id="MF_00197">
    <property type="entry name" value="DAP_epimerase"/>
    <property type="match status" value="1"/>
</dbReference>
<dbReference type="InterPro" id="IPR018510">
    <property type="entry name" value="DAP_epimerase_AS"/>
</dbReference>
<dbReference type="InterPro" id="IPR001653">
    <property type="entry name" value="DAP_epimerase_DapF"/>
</dbReference>
<dbReference type="NCBIfam" id="TIGR00652">
    <property type="entry name" value="DapF"/>
    <property type="match status" value="1"/>
</dbReference>
<dbReference type="PANTHER" id="PTHR31689:SF0">
    <property type="entry name" value="DIAMINOPIMELATE EPIMERASE"/>
    <property type="match status" value="1"/>
</dbReference>
<dbReference type="PANTHER" id="PTHR31689">
    <property type="entry name" value="DIAMINOPIMELATE EPIMERASE, CHLOROPLASTIC"/>
    <property type="match status" value="1"/>
</dbReference>
<dbReference type="Pfam" id="PF01678">
    <property type="entry name" value="DAP_epimerase"/>
    <property type="match status" value="2"/>
</dbReference>
<dbReference type="SUPFAM" id="SSF54506">
    <property type="entry name" value="Diaminopimelate epimerase-like"/>
    <property type="match status" value="1"/>
</dbReference>
<dbReference type="PROSITE" id="PS01326">
    <property type="entry name" value="DAP_EPIMERASE"/>
    <property type="match status" value="1"/>
</dbReference>
<sequence length="274" mass="30294">MQFSKMHGLGNDFMVVDAVTQNVYFSPELICRLANRHTGVGFDQLLVVEAPYDPELDFHYRIFNADGSEVAQCGNGARCFARFVRIKGLTNKREIKVSTQSGRMTLHVMDNEDVCVNMGEPEFEPQKVPFRAQKVEKTYIIRAMERTVLCGVVSMGNPHCVIQVEDIKTAEVESLGSVLEQHERFPERANIGFMQVVDRNTLHLRVFERGAGETQACGSGACAAVAVGISQGLLDRKVKVNLPGGSLSIEWKGTGNPLYMTGPAVHIYDGTIQL</sequence>
<organism>
    <name type="scientific">Proteus mirabilis (strain HI4320)</name>
    <dbReference type="NCBI Taxonomy" id="529507"/>
    <lineage>
        <taxon>Bacteria</taxon>
        <taxon>Pseudomonadati</taxon>
        <taxon>Pseudomonadota</taxon>
        <taxon>Gammaproteobacteria</taxon>
        <taxon>Enterobacterales</taxon>
        <taxon>Morganellaceae</taxon>
        <taxon>Proteus</taxon>
    </lineage>
</organism>
<name>DAPF_PROMH</name>
<keyword id="KW-0028">Amino-acid biosynthesis</keyword>
<keyword id="KW-0963">Cytoplasm</keyword>
<keyword id="KW-0413">Isomerase</keyword>
<keyword id="KW-0457">Lysine biosynthesis</keyword>
<keyword id="KW-1185">Reference proteome</keyword>
<gene>
    <name evidence="1" type="primary">dapF</name>
    <name type="ordered locus">PMI3336</name>
</gene>
<accession>B4F1X7</accession>